<comment type="function">
    <text evidence="1">Catalyzes the removal of elemental sulfur and selenium atoms from L-cysteine, L-cystine, L-selenocysteine, and L-selenocystine to produce L-alanine.</text>
</comment>
<comment type="catalytic activity">
    <reaction>
        <text>(sulfur carrier)-H + L-cysteine = (sulfur carrier)-SH + L-alanine</text>
        <dbReference type="Rhea" id="RHEA:43892"/>
        <dbReference type="Rhea" id="RHEA-COMP:14737"/>
        <dbReference type="Rhea" id="RHEA-COMP:14739"/>
        <dbReference type="ChEBI" id="CHEBI:29917"/>
        <dbReference type="ChEBI" id="CHEBI:35235"/>
        <dbReference type="ChEBI" id="CHEBI:57972"/>
        <dbReference type="ChEBI" id="CHEBI:64428"/>
        <dbReference type="EC" id="2.8.1.7"/>
    </reaction>
</comment>
<comment type="cofactor">
    <cofactor evidence="1">
        <name>pyridoxal 5'-phosphate</name>
        <dbReference type="ChEBI" id="CHEBI:597326"/>
    </cofactor>
</comment>
<comment type="similarity">
    <text evidence="2">Belongs to the class-V pyridoxal-phosphate-dependent aminotransferase family. Csd subfamily.</text>
</comment>
<gene>
    <name type="primary">csd</name>
    <name type="ordered locus">MW0797</name>
</gene>
<protein>
    <recommendedName>
        <fullName>Probable cysteine desulfurase</fullName>
        <ecNumber>2.8.1.7</ecNumber>
    </recommendedName>
</protein>
<proteinExistence type="inferred from homology"/>
<feature type="chain" id="PRO_0000150314" description="Probable cysteine desulfurase">
    <location>
        <begin position="1"/>
        <end position="413"/>
    </location>
</feature>
<feature type="active site" description="Cysteine persulfide intermediate" evidence="1">
    <location>
        <position position="368"/>
    </location>
</feature>
<feature type="modified residue" description="N6-(pyridoxal phosphate)lysine" evidence="1">
    <location>
        <position position="229"/>
    </location>
</feature>
<organism>
    <name type="scientific">Staphylococcus aureus (strain MW2)</name>
    <dbReference type="NCBI Taxonomy" id="196620"/>
    <lineage>
        <taxon>Bacteria</taxon>
        <taxon>Bacillati</taxon>
        <taxon>Bacillota</taxon>
        <taxon>Bacilli</taxon>
        <taxon>Bacillales</taxon>
        <taxon>Staphylococcaceae</taxon>
        <taxon>Staphylococcus</taxon>
    </lineage>
</organism>
<keyword id="KW-0663">Pyridoxal phosphate</keyword>
<keyword id="KW-0808">Transferase</keyword>
<name>CSD_STAAW</name>
<sequence>MAEHSFDVNEVIKDFPILDQKVNGKRLAYLDSTATSQTPVQVLNVLEDYYKRYNSNVHRGVHTLGSLATDGYENARETVRRFINAKYFEEIIFTRGTTASINLVAHSYGDANVEEGDEIVVTEMEHHANIVPWQQLAKRKNATLKFIPMTADGELNIEDIKQTINDKTKIVAIAHISNVLGTINDVKTIAEIAHQHGAIISVDGAQAAPHMKLDMQEMNADFYSFSGHKMLGPTGIGVLFGKRELLQKMEPIEFGGDMIDFVSKYDATWADLPTKFEAGTPLIAQAIGLAEAIRYLERIGFDAIHKYEQELTIYAYEQMSAIEGIEIYGPPKDRRAGVITFNLQDVHPHDVATAVDTEGVAVRAGHHCAQPLMKWLNVSSTARASFYIYNTKEDVDQLINALKQTKEFFSYEF</sequence>
<reference key="1">
    <citation type="journal article" date="2002" name="Lancet">
        <title>Genome and virulence determinants of high virulence community-acquired MRSA.</title>
        <authorList>
            <person name="Baba T."/>
            <person name="Takeuchi F."/>
            <person name="Kuroda M."/>
            <person name="Yuzawa H."/>
            <person name="Aoki K."/>
            <person name="Oguchi A."/>
            <person name="Nagai Y."/>
            <person name="Iwama N."/>
            <person name="Asano K."/>
            <person name="Naimi T."/>
            <person name="Kuroda H."/>
            <person name="Cui L."/>
            <person name="Yamamoto K."/>
            <person name="Hiramatsu K."/>
        </authorList>
    </citation>
    <scope>NUCLEOTIDE SEQUENCE [LARGE SCALE GENOMIC DNA]</scope>
    <source>
        <strain>MW2</strain>
    </source>
</reference>
<evidence type="ECO:0000250" key="1"/>
<evidence type="ECO:0000305" key="2"/>
<accession>Q8NXH0</accession>
<dbReference type="EC" id="2.8.1.7"/>
<dbReference type="EMBL" id="BA000033">
    <property type="protein sequence ID" value="BAB94662.1"/>
    <property type="molecule type" value="Genomic_DNA"/>
</dbReference>
<dbReference type="SMR" id="Q8NXH0"/>
<dbReference type="KEGG" id="sam:MW0797"/>
<dbReference type="HOGENOM" id="CLU_003433_2_5_9"/>
<dbReference type="GO" id="GO:0031071">
    <property type="term" value="F:cysteine desulfurase activity"/>
    <property type="evidence" value="ECO:0007669"/>
    <property type="project" value="UniProtKB-EC"/>
</dbReference>
<dbReference type="GO" id="GO:0030170">
    <property type="term" value="F:pyridoxal phosphate binding"/>
    <property type="evidence" value="ECO:0007669"/>
    <property type="project" value="InterPro"/>
</dbReference>
<dbReference type="GO" id="GO:0006534">
    <property type="term" value="P:cysteine metabolic process"/>
    <property type="evidence" value="ECO:0007669"/>
    <property type="project" value="InterPro"/>
</dbReference>
<dbReference type="CDD" id="cd06453">
    <property type="entry name" value="SufS_like"/>
    <property type="match status" value="1"/>
</dbReference>
<dbReference type="Gene3D" id="3.90.1150.10">
    <property type="entry name" value="Aspartate Aminotransferase, domain 1"/>
    <property type="match status" value="1"/>
</dbReference>
<dbReference type="Gene3D" id="3.40.640.10">
    <property type="entry name" value="Type I PLP-dependent aspartate aminotransferase-like (Major domain)"/>
    <property type="match status" value="1"/>
</dbReference>
<dbReference type="InterPro" id="IPR000192">
    <property type="entry name" value="Aminotrans_V_dom"/>
</dbReference>
<dbReference type="InterPro" id="IPR010970">
    <property type="entry name" value="Cys_dSase_SufS"/>
</dbReference>
<dbReference type="InterPro" id="IPR016454">
    <property type="entry name" value="Cysteine_dSase"/>
</dbReference>
<dbReference type="InterPro" id="IPR015424">
    <property type="entry name" value="PyrdxlP-dep_Trfase"/>
</dbReference>
<dbReference type="InterPro" id="IPR015421">
    <property type="entry name" value="PyrdxlP-dep_Trfase_major"/>
</dbReference>
<dbReference type="InterPro" id="IPR015422">
    <property type="entry name" value="PyrdxlP-dep_Trfase_small"/>
</dbReference>
<dbReference type="NCBIfam" id="TIGR01979">
    <property type="entry name" value="sufS"/>
    <property type="match status" value="1"/>
</dbReference>
<dbReference type="PANTHER" id="PTHR43586">
    <property type="entry name" value="CYSTEINE DESULFURASE"/>
    <property type="match status" value="1"/>
</dbReference>
<dbReference type="PANTHER" id="PTHR43586:SF8">
    <property type="entry name" value="CYSTEINE DESULFURASE 1, CHLOROPLASTIC"/>
    <property type="match status" value="1"/>
</dbReference>
<dbReference type="Pfam" id="PF00266">
    <property type="entry name" value="Aminotran_5"/>
    <property type="match status" value="1"/>
</dbReference>
<dbReference type="PIRSF" id="PIRSF005572">
    <property type="entry name" value="NifS"/>
    <property type="match status" value="1"/>
</dbReference>
<dbReference type="SUPFAM" id="SSF53383">
    <property type="entry name" value="PLP-dependent transferases"/>
    <property type="match status" value="1"/>
</dbReference>